<keyword id="KW-0012">Acyltransferase</keyword>
<keyword id="KW-0045">Antibiotic biosynthesis</keyword>
<keyword id="KW-0963">Cytoplasm</keyword>
<keyword id="KW-0808">Transferase</keyword>
<accession>A7Z4X9</accession>
<comment type="function">
    <text evidence="2">Probably involved in some intermediate steps for the synthesis of the antibiotic polyketide bacillaene which is involved in secondary metabolism.</text>
</comment>
<comment type="pathway">
    <text evidence="2">Antibiotic biosynthesis; bacillaene biosynthesis.</text>
</comment>
<comment type="subcellular location">
    <subcellularLocation>
        <location evidence="1">Cytoplasm</location>
    </subcellularLocation>
</comment>
<evidence type="ECO:0000250" key="1"/>
<evidence type="ECO:0000269" key="2">
    <source>
    </source>
</evidence>
<organism>
    <name type="scientific">Bacillus velezensis (strain DSM 23117 / BGSC 10A6 / LMG 26770 / FZB42)</name>
    <name type="common">Bacillus amyloliquefaciens subsp. plantarum</name>
    <dbReference type="NCBI Taxonomy" id="326423"/>
    <lineage>
        <taxon>Bacteria</taxon>
        <taxon>Bacillati</taxon>
        <taxon>Bacillota</taxon>
        <taxon>Bacilli</taxon>
        <taxon>Bacillales</taxon>
        <taxon>Bacillaceae</taxon>
        <taxon>Bacillus</taxon>
        <taxon>Bacillus amyloliquefaciens group</taxon>
    </lineage>
</organism>
<name>BAED_BACVZ</name>
<proteinExistence type="evidence at protein level"/>
<gene>
    <name type="primary">baeD</name>
    <name type="ordered locus">RBAM_016920</name>
</gene>
<feature type="chain" id="PRO_0000387999" description="Polyketide biosynthesis acyltransferase homolog BaeD">
    <location>
        <begin position="1"/>
        <end position="324"/>
    </location>
</feature>
<feature type="active site" evidence="1">
    <location>
        <position position="99"/>
    </location>
</feature>
<dbReference type="EC" id="2.3.1.-"/>
<dbReference type="EMBL" id="CP000560">
    <property type="protein sequence ID" value="ABS74055.1"/>
    <property type="molecule type" value="Genomic_DNA"/>
</dbReference>
<dbReference type="RefSeq" id="WP_012117590.1">
    <property type="nucleotide sequence ID" value="NC_009725.2"/>
</dbReference>
<dbReference type="SMR" id="A7Z4X9"/>
<dbReference type="GeneID" id="93080826"/>
<dbReference type="KEGG" id="bay:RBAM_016920"/>
<dbReference type="HOGENOM" id="CLU_030558_3_1_9"/>
<dbReference type="UniPathway" id="UPA01003"/>
<dbReference type="Proteomes" id="UP000001120">
    <property type="component" value="Chromosome"/>
</dbReference>
<dbReference type="GO" id="GO:0005737">
    <property type="term" value="C:cytoplasm"/>
    <property type="evidence" value="ECO:0007669"/>
    <property type="project" value="UniProtKB-SubCell"/>
</dbReference>
<dbReference type="GO" id="GO:0016746">
    <property type="term" value="F:acyltransferase activity"/>
    <property type="evidence" value="ECO:0007669"/>
    <property type="project" value="UniProtKB-KW"/>
</dbReference>
<dbReference type="GO" id="GO:0017000">
    <property type="term" value="P:antibiotic biosynthetic process"/>
    <property type="evidence" value="ECO:0007669"/>
    <property type="project" value="UniProtKB-KW"/>
</dbReference>
<dbReference type="Gene3D" id="3.40.366.10">
    <property type="entry name" value="Malonyl-Coenzyme A Acyl Carrier Protein, domain 2"/>
    <property type="match status" value="1"/>
</dbReference>
<dbReference type="InterPro" id="IPR001227">
    <property type="entry name" value="Ac_transferase_dom_sf"/>
</dbReference>
<dbReference type="InterPro" id="IPR014043">
    <property type="entry name" value="Acyl_transferase_dom"/>
</dbReference>
<dbReference type="InterPro" id="IPR016035">
    <property type="entry name" value="Acyl_Trfase/lysoPLipase"/>
</dbReference>
<dbReference type="InterPro" id="IPR016036">
    <property type="entry name" value="Malonyl_transacylase_ACP-bd"/>
</dbReference>
<dbReference type="InterPro" id="IPR050444">
    <property type="entry name" value="Polyketide_Synthase"/>
</dbReference>
<dbReference type="PANTHER" id="PTHR45681:SF6">
    <property type="entry name" value="POLYKETIDE SYNTHASE 37"/>
    <property type="match status" value="1"/>
</dbReference>
<dbReference type="PANTHER" id="PTHR45681">
    <property type="entry name" value="POLYKETIDE SYNTHASE 44-RELATED"/>
    <property type="match status" value="1"/>
</dbReference>
<dbReference type="Pfam" id="PF00698">
    <property type="entry name" value="Acyl_transf_1"/>
    <property type="match status" value="1"/>
</dbReference>
<dbReference type="SMART" id="SM00827">
    <property type="entry name" value="PKS_AT"/>
    <property type="match status" value="1"/>
</dbReference>
<dbReference type="SUPFAM" id="SSF52151">
    <property type="entry name" value="FabD/lysophospholipase-like"/>
    <property type="match status" value="1"/>
</dbReference>
<dbReference type="SUPFAM" id="SSF55048">
    <property type="entry name" value="Probable ACP-binding domain of malonyl-CoA ACP transacylase"/>
    <property type="match status" value="1"/>
</dbReference>
<sequence>MNQPIVFMFSGQGSQYYQMGKELFAHNAAFRQKMLDLDDFAVSRFGYSVLKEMYHTGNRLSDPFDRLLFSHPAIFMAEYALAYALEQRGIRPDYVIGASLGEYAAAAVSGVLSAEDALDCVLEQARIVTETCRNGSMLAILGDPALYQDDPLLGEHSELASVNYHSHFVISGEREHIKKIMDDLREKQIPHQLLPVSYGFHSALVDQAEQPYKRFLAQKSIRTPFIPYISSATGEAETDIQADFFWDIVRKPIRFREALQFADSRQKGLYIDAGPSGTLAAFAKQILPAGSAERIRAIMTPFHKEQTHLQQIEDSILSPPGRRL</sequence>
<protein>
    <recommendedName>
        <fullName>Polyketide biosynthesis acyltransferase homolog BaeD</fullName>
        <shortName>AT</shortName>
        <ecNumber>2.3.1.-</ecNumber>
    </recommendedName>
    <alternativeName>
        <fullName>Transacylase</fullName>
    </alternativeName>
</protein>
<reference key="1">
    <citation type="journal article" date="2007" name="Nat. Biotechnol.">
        <title>Comparative analysis of the complete genome sequence of the plant growth-promoting bacterium Bacillus amyloliquefaciens FZB42.</title>
        <authorList>
            <person name="Chen X.H."/>
            <person name="Koumoutsi A."/>
            <person name="Scholz R."/>
            <person name="Eisenreich A."/>
            <person name="Schneider K."/>
            <person name="Heinemeyer I."/>
            <person name="Morgenstern B."/>
            <person name="Voss B."/>
            <person name="Hess W.R."/>
            <person name="Reva O."/>
            <person name="Junge H."/>
            <person name="Voigt B."/>
            <person name="Jungblut P.R."/>
            <person name="Vater J."/>
            <person name="Suessmuth R."/>
            <person name="Liesegang H."/>
            <person name="Strittmatter A."/>
            <person name="Gottschalk G."/>
            <person name="Borriss R."/>
        </authorList>
    </citation>
    <scope>NUCLEOTIDE SEQUENCE [LARGE SCALE GENOMIC DNA]</scope>
    <source>
        <strain>DSM 23117 / BGSC 10A6 / LMG 26770 / FZB42</strain>
    </source>
</reference>
<reference key="2">
    <citation type="journal article" date="2006" name="J. Bacteriol.">
        <title>Structural and functional characterization of three polyketide synthase gene clusters in Bacillus amyloliquefaciens FZB 42.</title>
        <authorList>
            <person name="Chen X.-H."/>
            <person name="Vater J."/>
            <person name="Piel J."/>
            <person name="Franke P."/>
            <person name="Scholz R."/>
            <person name="Schneider K."/>
            <person name="Koumoutsi A."/>
            <person name="Hitzeroth G."/>
            <person name="Grammel N."/>
            <person name="Strittmatter A.W."/>
            <person name="Gottschalk G."/>
            <person name="Suessmuth R.D."/>
            <person name="Borriss R."/>
        </authorList>
    </citation>
    <scope>PATHWAY</scope>
    <scope>FUNCTION IN BACILLAENE BIOSYNTHESIS</scope>
</reference>